<reference key="1">
    <citation type="submission" date="2006-09" db="EMBL/GenBank/DDBJ databases">
        <authorList>
            <consortium name="The Klebsiella pneumonia Genome Sequencing Project"/>
            <person name="McClelland M."/>
            <person name="Sanderson E.K."/>
            <person name="Spieth J."/>
            <person name="Clifton W.S."/>
            <person name="Latreille P."/>
            <person name="Sabo A."/>
            <person name="Pepin K."/>
            <person name="Bhonagiri V."/>
            <person name="Porwollik S."/>
            <person name="Ali J."/>
            <person name="Wilson R.K."/>
        </authorList>
    </citation>
    <scope>NUCLEOTIDE SEQUENCE [LARGE SCALE GENOMIC DNA]</scope>
    <source>
        <strain>ATCC 700721 / MGH 78578</strain>
    </source>
</reference>
<accession>A6T4L9</accession>
<organism>
    <name type="scientific">Klebsiella pneumoniae subsp. pneumoniae (strain ATCC 700721 / MGH 78578)</name>
    <dbReference type="NCBI Taxonomy" id="272620"/>
    <lineage>
        <taxon>Bacteria</taxon>
        <taxon>Pseudomonadati</taxon>
        <taxon>Pseudomonadota</taxon>
        <taxon>Gammaproteobacteria</taxon>
        <taxon>Enterobacterales</taxon>
        <taxon>Enterobacteriaceae</taxon>
        <taxon>Klebsiella/Raoultella group</taxon>
        <taxon>Klebsiella</taxon>
        <taxon>Klebsiella pneumoniae complex</taxon>
    </lineage>
</organism>
<comment type="function">
    <text evidence="1">Catalyzes the condensation of the acetyl group of acetyl-CoA with 3-methyl-2-oxobutanoate (2-ketoisovalerate) to form 3-carboxy-3-hydroxy-4-methylpentanoate (2-isopropylmalate).</text>
</comment>
<comment type="catalytic activity">
    <reaction evidence="1">
        <text>3-methyl-2-oxobutanoate + acetyl-CoA + H2O = (2S)-2-isopropylmalate + CoA + H(+)</text>
        <dbReference type="Rhea" id="RHEA:21524"/>
        <dbReference type="ChEBI" id="CHEBI:1178"/>
        <dbReference type="ChEBI" id="CHEBI:11851"/>
        <dbReference type="ChEBI" id="CHEBI:15377"/>
        <dbReference type="ChEBI" id="CHEBI:15378"/>
        <dbReference type="ChEBI" id="CHEBI:57287"/>
        <dbReference type="ChEBI" id="CHEBI:57288"/>
        <dbReference type="EC" id="2.3.3.13"/>
    </reaction>
</comment>
<comment type="cofactor">
    <cofactor evidence="1">
        <name>Mn(2+)</name>
        <dbReference type="ChEBI" id="CHEBI:29035"/>
    </cofactor>
</comment>
<comment type="pathway">
    <text evidence="1">Amino-acid biosynthesis; L-leucine biosynthesis; L-leucine from 3-methyl-2-oxobutanoate: step 1/4.</text>
</comment>
<comment type="subunit">
    <text evidence="1">Homodimer.</text>
</comment>
<comment type="subcellular location">
    <subcellularLocation>
        <location evidence="1">Cytoplasm</location>
    </subcellularLocation>
</comment>
<comment type="similarity">
    <text evidence="1">Belongs to the alpha-IPM synthase/homocitrate synthase family. LeuA type 1 subfamily.</text>
</comment>
<keyword id="KW-0028">Amino-acid biosynthesis</keyword>
<keyword id="KW-0100">Branched-chain amino acid biosynthesis</keyword>
<keyword id="KW-0963">Cytoplasm</keyword>
<keyword id="KW-0432">Leucine biosynthesis</keyword>
<keyword id="KW-0464">Manganese</keyword>
<keyword id="KW-0479">Metal-binding</keyword>
<keyword id="KW-0808">Transferase</keyword>
<proteinExistence type="inferred from homology"/>
<gene>
    <name evidence="1" type="primary">leuA</name>
    <name type="ordered locus">KPN78578_00790</name>
    <name type="ORF">KPN_00080</name>
</gene>
<evidence type="ECO:0000255" key="1">
    <source>
        <dbReference type="HAMAP-Rule" id="MF_01025"/>
    </source>
</evidence>
<sequence length="523" mass="57514">MSQQVIIFDTTLRDGEQALQASLSVKEKLQIALALERMGVDVMEVGFPVSSPGDFESVQTIARTIKNSRVCALARCVEKDIDVAAESLKVAEAFRIHTFIATSPMHIATKLRSTLDEVIERAIYMVKRARNYTDDVEFSCEDAGRTPIADLARVVEAAINAGATTINIPDTVGYTMPFEYANIISGLYDRVPNIDKAIISVHTHDDLGIAVGNALAAVHAGARQVEGAMNGIGERAGNCALEEVIMAIKVRKDIMNVHTNINHHEIWRTSQTVSQICNMPIPANKAIVGTGAFAHSSGIHQDGVLKNRENYEIMTPESIGLNQVQLNLTSRSGRAAVKHRMEEMGYQESDYNLDHLYDAFLKLADKKGQVFDYDLEALAFINKQQEEPEHFRLDYFNVQSGSSDIATASIKLVCGDEIKTEAANGNGPVDAIYQAINRVTDYNIELVKYGLSAKGHGKDALGQVDIVVDYNGRRFHGVGLATDIVESSAKAMVHVLNNIWRAAEVEKELQRKAQNKENNKETV</sequence>
<feature type="chain" id="PRO_1000149213" description="2-isopropylmalate synthase">
    <location>
        <begin position="1"/>
        <end position="523"/>
    </location>
</feature>
<feature type="domain" description="Pyruvate carboxyltransferase" evidence="1">
    <location>
        <begin position="5"/>
        <end position="267"/>
    </location>
</feature>
<feature type="region of interest" description="Regulatory domain" evidence="1">
    <location>
        <begin position="392"/>
        <end position="523"/>
    </location>
</feature>
<feature type="binding site" evidence="1">
    <location>
        <position position="14"/>
    </location>
    <ligand>
        <name>Mn(2+)</name>
        <dbReference type="ChEBI" id="CHEBI:29035"/>
    </ligand>
</feature>
<feature type="binding site" evidence="1">
    <location>
        <position position="202"/>
    </location>
    <ligand>
        <name>Mn(2+)</name>
        <dbReference type="ChEBI" id="CHEBI:29035"/>
    </ligand>
</feature>
<feature type="binding site" evidence="1">
    <location>
        <position position="204"/>
    </location>
    <ligand>
        <name>Mn(2+)</name>
        <dbReference type="ChEBI" id="CHEBI:29035"/>
    </ligand>
</feature>
<feature type="binding site" evidence="1">
    <location>
        <position position="238"/>
    </location>
    <ligand>
        <name>Mn(2+)</name>
        <dbReference type="ChEBI" id="CHEBI:29035"/>
    </ligand>
</feature>
<dbReference type="EC" id="2.3.3.13" evidence="1"/>
<dbReference type="EMBL" id="CP000647">
    <property type="protein sequence ID" value="ABR75540.1"/>
    <property type="molecule type" value="Genomic_DNA"/>
</dbReference>
<dbReference type="RefSeq" id="WP_004178594.1">
    <property type="nucleotide sequence ID" value="NC_009648.1"/>
</dbReference>
<dbReference type="SMR" id="A6T4L9"/>
<dbReference type="STRING" id="272620.KPN_00080"/>
<dbReference type="PaxDb" id="272620-KPN_00080"/>
<dbReference type="EnsemblBacteria" id="ABR75540">
    <property type="protein sequence ID" value="ABR75540"/>
    <property type="gene ID" value="KPN_00080"/>
</dbReference>
<dbReference type="KEGG" id="kpn:KPN_00080"/>
<dbReference type="HOGENOM" id="CLU_022158_0_1_6"/>
<dbReference type="UniPathway" id="UPA00048">
    <property type="reaction ID" value="UER00070"/>
</dbReference>
<dbReference type="Proteomes" id="UP000000265">
    <property type="component" value="Chromosome"/>
</dbReference>
<dbReference type="GO" id="GO:0005829">
    <property type="term" value="C:cytosol"/>
    <property type="evidence" value="ECO:0007669"/>
    <property type="project" value="TreeGrafter"/>
</dbReference>
<dbReference type="GO" id="GO:0003852">
    <property type="term" value="F:2-isopropylmalate synthase activity"/>
    <property type="evidence" value="ECO:0007669"/>
    <property type="project" value="UniProtKB-UniRule"/>
</dbReference>
<dbReference type="GO" id="GO:0003985">
    <property type="term" value="F:acetyl-CoA C-acetyltransferase activity"/>
    <property type="evidence" value="ECO:0007669"/>
    <property type="project" value="UniProtKB-UniRule"/>
</dbReference>
<dbReference type="GO" id="GO:0030145">
    <property type="term" value="F:manganese ion binding"/>
    <property type="evidence" value="ECO:0007669"/>
    <property type="project" value="UniProtKB-UniRule"/>
</dbReference>
<dbReference type="GO" id="GO:0009098">
    <property type="term" value="P:L-leucine biosynthetic process"/>
    <property type="evidence" value="ECO:0007669"/>
    <property type="project" value="UniProtKB-UniRule"/>
</dbReference>
<dbReference type="CDD" id="cd07940">
    <property type="entry name" value="DRE_TIM_IPMS"/>
    <property type="match status" value="1"/>
</dbReference>
<dbReference type="FunFam" id="1.10.238.260:FF:000001">
    <property type="entry name" value="2-isopropylmalate synthase"/>
    <property type="match status" value="1"/>
</dbReference>
<dbReference type="FunFam" id="3.20.20.70:FF:000010">
    <property type="entry name" value="2-isopropylmalate synthase"/>
    <property type="match status" value="1"/>
</dbReference>
<dbReference type="FunFam" id="3.30.160.270:FF:000001">
    <property type="entry name" value="2-isopropylmalate synthase"/>
    <property type="match status" value="1"/>
</dbReference>
<dbReference type="Gene3D" id="1.10.238.260">
    <property type="match status" value="1"/>
</dbReference>
<dbReference type="Gene3D" id="3.30.160.270">
    <property type="match status" value="1"/>
</dbReference>
<dbReference type="Gene3D" id="3.20.20.70">
    <property type="entry name" value="Aldolase class I"/>
    <property type="match status" value="1"/>
</dbReference>
<dbReference type="HAMAP" id="MF_01025">
    <property type="entry name" value="LeuA_type1"/>
    <property type="match status" value="1"/>
</dbReference>
<dbReference type="InterPro" id="IPR050073">
    <property type="entry name" value="2-IPM_HCS-like"/>
</dbReference>
<dbReference type="InterPro" id="IPR013709">
    <property type="entry name" value="2-isopropylmalate_synth_dimer"/>
</dbReference>
<dbReference type="InterPro" id="IPR002034">
    <property type="entry name" value="AIPM/Hcit_synth_CS"/>
</dbReference>
<dbReference type="InterPro" id="IPR013785">
    <property type="entry name" value="Aldolase_TIM"/>
</dbReference>
<dbReference type="InterPro" id="IPR054691">
    <property type="entry name" value="LeuA/HCS_post-cat"/>
</dbReference>
<dbReference type="InterPro" id="IPR036230">
    <property type="entry name" value="LeuA_allosteric_dom_sf"/>
</dbReference>
<dbReference type="InterPro" id="IPR005671">
    <property type="entry name" value="LeuA_bact_synth"/>
</dbReference>
<dbReference type="InterPro" id="IPR000891">
    <property type="entry name" value="PYR_CT"/>
</dbReference>
<dbReference type="NCBIfam" id="TIGR00973">
    <property type="entry name" value="leuA_bact"/>
    <property type="match status" value="1"/>
</dbReference>
<dbReference type="NCBIfam" id="NF002084">
    <property type="entry name" value="PRK00915.1-1"/>
    <property type="match status" value="1"/>
</dbReference>
<dbReference type="NCBIfam" id="NF002086">
    <property type="entry name" value="PRK00915.1-3"/>
    <property type="match status" value="1"/>
</dbReference>
<dbReference type="PANTHER" id="PTHR10277:SF9">
    <property type="entry name" value="2-ISOPROPYLMALATE SYNTHASE 1, CHLOROPLASTIC-RELATED"/>
    <property type="match status" value="1"/>
</dbReference>
<dbReference type="PANTHER" id="PTHR10277">
    <property type="entry name" value="HOMOCITRATE SYNTHASE-RELATED"/>
    <property type="match status" value="1"/>
</dbReference>
<dbReference type="Pfam" id="PF22617">
    <property type="entry name" value="HCS_D2"/>
    <property type="match status" value="1"/>
</dbReference>
<dbReference type="Pfam" id="PF00682">
    <property type="entry name" value="HMGL-like"/>
    <property type="match status" value="1"/>
</dbReference>
<dbReference type="Pfam" id="PF08502">
    <property type="entry name" value="LeuA_dimer"/>
    <property type="match status" value="1"/>
</dbReference>
<dbReference type="SMART" id="SM00917">
    <property type="entry name" value="LeuA_dimer"/>
    <property type="match status" value="1"/>
</dbReference>
<dbReference type="SUPFAM" id="SSF110921">
    <property type="entry name" value="2-isopropylmalate synthase LeuA, allosteric (dimerisation) domain"/>
    <property type="match status" value="1"/>
</dbReference>
<dbReference type="SUPFAM" id="SSF51569">
    <property type="entry name" value="Aldolase"/>
    <property type="match status" value="1"/>
</dbReference>
<dbReference type="PROSITE" id="PS00815">
    <property type="entry name" value="AIPM_HOMOCIT_SYNTH_1"/>
    <property type="match status" value="1"/>
</dbReference>
<dbReference type="PROSITE" id="PS00816">
    <property type="entry name" value="AIPM_HOMOCIT_SYNTH_2"/>
    <property type="match status" value="1"/>
</dbReference>
<dbReference type="PROSITE" id="PS50991">
    <property type="entry name" value="PYR_CT"/>
    <property type="match status" value="1"/>
</dbReference>
<name>LEU1_KLEP7</name>
<protein>
    <recommendedName>
        <fullName evidence="1">2-isopropylmalate synthase</fullName>
        <ecNumber evidence="1">2.3.3.13</ecNumber>
    </recommendedName>
    <alternativeName>
        <fullName evidence="1">Alpha-IPM synthase</fullName>
    </alternativeName>
    <alternativeName>
        <fullName evidence="1">Alpha-isopropylmalate synthase</fullName>
    </alternativeName>
</protein>